<evidence type="ECO:0000255" key="1">
    <source>
        <dbReference type="HAMAP-Rule" id="MF_01384"/>
    </source>
</evidence>
<name>URED_PSEF5</name>
<reference key="1">
    <citation type="journal article" date="2005" name="Nat. Biotechnol.">
        <title>Complete genome sequence of the plant commensal Pseudomonas fluorescens Pf-5.</title>
        <authorList>
            <person name="Paulsen I.T."/>
            <person name="Press C.M."/>
            <person name="Ravel J."/>
            <person name="Kobayashi D.Y."/>
            <person name="Myers G.S.A."/>
            <person name="Mavrodi D.V."/>
            <person name="DeBoy R.T."/>
            <person name="Seshadri R."/>
            <person name="Ren Q."/>
            <person name="Madupu R."/>
            <person name="Dodson R.J."/>
            <person name="Durkin A.S."/>
            <person name="Brinkac L.M."/>
            <person name="Daugherty S.C."/>
            <person name="Sullivan S.A."/>
            <person name="Rosovitz M.J."/>
            <person name="Gwinn M.L."/>
            <person name="Zhou L."/>
            <person name="Schneider D.J."/>
            <person name="Cartinhour S.W."/>
            <person name="Nelson W.C."/>
            <person name="Weidman J."/>
            <person name="Watkins K."/>
            <person name="Tran K."/>
            <person name="Khouri H."/>
            <person name="Pierson E.A."/>
            <person name="Pierson L.S. III"/>
            <person name="Thomashow L.S."/>
            <person name="Loper J.E."/>
        </authorList>
    </citation>
    <scope>NUCLEOTIDE SEQUENCE [LARGE SCALE GENOMIC DNA]</scope>
    <source>
        <strain>ATCC BAA-477 / NRRL B-23932 / Pf-5</strain>
    </source>
</reference>
<protein>
    <recommendedName>
        <fullName evidence="1">Urease accessory protein UreD</fullName>
    </recommendedName>
</protein>
<sequence>MNLPAATALFTPSWHAELELAYARCGATTRPVLRRHLGPLRVQKHLYAEGPEVCQHIIVHPPGGIAGGDRLAISARVDSGAWAQLTSPGAAKWYRATGPASQTLNLQVAPGATLEWLPQETIVFSAAQAELTTRIELQGDARLFYWDIIALGRPASGERFEQGHFQAHLDLYRDGRPLWHERQRIGGGDGLLDSPIGLDGQPVFATLLVTGEIDSELLERCRALAHPVRGDLSQLPGLLVARCLASEALQARAWLIELWRLLRPALLGREARPPRIWNT</sequence>
<keyword id="KW-0143">Chaperone</keyword>
<keyword id="KW-0963">Cytoplasm</keyword>
<keyword id="KW-0996">Nickel insertion</keyword>
<gene>
    <name evidence="1" type="primary">ureD</name>
    <name type="ordered locus">PFL_0636</name>
</gene>
<feature type="chain" id="PRO_0000340486" description="Urease accessory protein UreD">
    <location>
        <begin position="1"/>
        <end position="279"/>
    </location>
</feature>
<comment type="function">
    <text evidence="1">Required for maturation of urease via the functional incorporation of the urease nickel metallocenter.</text>
</comment>
<comment type="subunit">
    <text evidence="1">UreD, UreF and UreG form a complex that acts as a GTP-hydrolysis-dependent molecular chaperone, activating the urease apoprotein by helping to assemble the nickel containing metallocenter of UreC. The UreE protein probably delivers the nickel.</text>
</comment>
<comment type="subcellular location">
    <subcellularLocation>
        <location evidence="1">Cytoplasm</location>
    </subcellularLocation>
</comment>
<comment type="similarity">
    <text evidence="1">Belongs to the UreD family.</text>
</comment>
<dbReference type="EMBL" id="CP000076">
    <property type="protein sequence ID" value="AAY96043.1"/>
    <property type="molecule type" value="Genomic_DNA"/>
</dbReference>
<dbReference type="RefSeq" id="WP_011059004.1">
    <property type="nucleotide sequence ID" value="NC_004129.6"/>
</dbReference>
<dbReference type="SMR" id="Q4KJ05"/>
<dbReference type="STRING" id="220664.PFL_0636"/>
<dbReference type="KEGG" id="pfl:PFL_0636"/>
<dbReference type="PATRIC" id="fig|220664.5.peg.652"/>
<dbReference type="eggNOG" id="COG0829">
    <property type="taxonomic scope" value="Bacteria"/>
</dbReference>
<dbReference type="HOGENOM" id="CLU_056339_0_0_6"/>
<dbReference type="Proteomes" id="UP000008540">
    <property type="component" value="Chromosome"/>
</dbReference>
<dbReference type="GO" id="GO:0005737">
    <property type="term" value="C:cytoplasm"/>
    <property type="evidence" value="ECO:0007669"/>
    <property type="project" value="UniProtKB-SubCell"/>
</dbReference>
<dbReference type="GO" id="GO:0016151">
    <property type="term" value="F:nickel cation binding"/>
    <property type="evidence" value="ECO:0007669"/>
    <property type="project" value="UniProtKB-UniRule"/>
</dbReference>
<dbReference type="HAMAP" id="MF_01384">
    <property type="entry name" value="UreD"/>
    <property type="match status" value="1"/>
</dbReference>
<dbReference type="InterPro" id="IPR002669">
    <property type="entry name" value="UreD"/>
</dbReference>
<dbReference type="PANTHER" id="PTHR33643">
    <property type="entry name" value="UREASE ACCESSORY PROTEIN D"/>
    <property type="match status" value="1"/>
</dbReference>
<dbReference type="PANTHER" id="PTHR33643:SF1">
    <property type="entry name" value="UREASE ACCESSORY PROTEIN D"/>
    <property type="match status" value="1"/>
</dbReference>
<dbReference type="Pfam" id="PF01774">
    <property type="entry name" value="UreD"/>
    <property type="match status" value="1"/>
</dbReference>
<organism>
    <name type="scientific">Pseudomonas fluorescens (strain ATCC BAA-477 / NRRL B-23932 / Pf-5)</name>
    <dbReference type="NCBI Taxonomy" id="220664"/>
    <lineage>
        <taxon>Bacteria</taxon>
        <taxon>Pseudomonadati</taxon>
        <taxon>Pseudomonadota</taxon>
        <taxon>Gammaproteobacteria</taxon>
        <taxon>Pseudomonadales</taxon>
        <taxon>Pseudomonadaceae</taxon>
        <taxon>Pseudomonas</taxon>
    </lineage>
</organism>
<proteinExistence type="inferred from homology"/>
<accession>Q4KJ05</accession>